<dbReference type="EMBL" id="M68929">
    <property type="protein sequence ID" value="AAC09400.1"/>
    <property type="molecule type" value="Genomic_DNA"/>
</dbReference>
<dbReference type="PIR" id="S25962">
    <property type="entry name" value="S25962"/>
</dbReference>
<dbReference type="GO" id="GO:0005739">
    <property type="term" value="C:mitochondrion"/>
    <property type="evidence" value="ECO:0007669"/>
    <property type="project" value="UniProtKB-SubCell"/>
</dbReference>
<feature type="chain" id="PRO_0000196853" description="Uncharacterized mitochondrial protein ymf26">
    <location>
        <begin position="1"/>
        <end position="63"/>
    </location>
</feature>
<sequence length="63" mass="7143">MDENRQVRFFQPFKKMFQTSQTSSVTGWIGSCVGGTSVSLLRLDGPKRPCVYPSIFIAVWKTK</sequence>
<reference key="1">
    <citation type="journal article" date="1992" name="J. Mol. Biol.">
        <title>Gene organization deduced from the complete sequence of liverwort Marchantia polymorpha mitochondrial DNA. A primitive form of plant mitochondrial genome.</title>
        <authorList>
            <person name="Oda K."/>
            <person name="Yamato K."/>
            <person name="Ohta E."/>
            <person name="Nakamura Y."/>
            <person name="Takemura M."/>
            <person name="Nozato N."/>
            <person name="Akashi K."/>
            <person name="Kanegae T."/>
            <person name="Ogura Y."/>
            <person name="Kohchi T."/>
            <person name="Ohyama K."/>
        </authorList>
    </citation>
    <scope>NUCLEOTIDE SEQUENCE [GENOMIC DNA]</scope>
</reference>
<organism>
    <name type="scientific">Marchantia polymorpha</name>
    <name type="common">Common liverwort</name>
    <name type="synonym">Marchantia aquatica</name>
    <dbReference type="NCBI Taxonomy" id="3197"/>
    <lineage>
        <taxon>Eukaryota</taxon>
        <taxon>Viridiplantae</taxon>
        <taxon>Streptophyta</taxon>
        <taxon>Embryophyta</taxon>
        <taxon>Marchantiophyta</taxon>
        <taxon>Marchantiopsida</taxon>
        <taxon>Marchantiidae</taxon>
        <taxon>Marchantiales</taxon>
        <taxon>Marchantiaceae</taxon>
        <taxon>Marchantia</taxon>
    </lineage>
</organism>
<keyword id="KW-0496">Mitochondrion</keyword>
<gene>
    <name type="primary">YMF26</name>
</gene>
<accession>P38468</accession>
<proteinExistence type="predicted"/>
<evidence type="ECO:0000305" key="1"/>
<comment type="subcellular location">
    <subcellularLocation>
        <location evidence="1">Mitochondrion</location>
    </subcellularLocation>
</comment>
<name>YMF26_MARPO</name>
<geneLocation type="mitochondrion"/>
<protein>
    <recommendedName>
        <fullName>Uncharacterized mitochondrial protein ymf26</fullName>
    </recommendedName>
    <alternativeName>
        <fullName>ORF63</fullName>
    </alternativeName>
</protein>